<feature type="propeptide" id="PRO_0000459642" evidence="5">
    <location>
        <begin position="1" status="less than"/>
        <end position="8"/>
    </location>
</feature>
<feature type="peptide" id="PRO_0000342434" description="Natriuretic peptide CnNP-b" evidence="2">
    <location>
        <begin position="9"/>
        <end position="39"/>
    </location>
</feature>
<feature type="region of interest" description="Disordered" evidence="3">
    <location>
        <begin position="20"/>
        <end position="39"/>
    </location>
</feature>
<feature type="disulfide bond" evidence="2">
    <location>
        <begin position="12"/>
        <end position="28"/>
    </location>
</feature>
<feature type="non-terminal residue">
    <location>
        <position position="1"/>
    </location>
</feature>
<dbReference type="EMBL" id="DQ420643">
    <property type="protein sequence ID" value="ABD83627.1"/>
    <property type="molecule type" value="mRNA"/>
</dbReference>
<dbReference type="GO" id="GO:0005576">
    <property type="term" value="C:extracellular region"/>
    <property type="evidence" value="ECO:0007669"/>
    <property type="project" value="UniProtKB-SubCell"/>
</dbReference>
<dbReference type="GO" id="GO:0005179">
    <property type="term" value="F:hormone activity"/>
    <property type="evidence" value="ECO:0007669"/>
    <property type="project" value="InterPro"/>
</dbReference>
<dbReference type="GO" id="GO:0090729">
    <property type="term" value="F:toxin activity"/>
    <property type="evidence" value="ECO:0007669"/>
    <property type="project" value="UniProtKB-KW"/>
</dbReference>
<dbReference type="GO" id="GO:0008217">
    <property type="term" value="P:regulation of blood pressure"/>
    <property type="evidence" value="ECO:0007669"/>
    <property type="project" value="UniProtKB-KW"/>
</dbReference>
<dbReference type="GO" id="GO:0042311">
    <property type="term" value="P:vasodilation"/>
    <property type="evidence" value="ECO:0007669"/>
    <property type="project" value="UniProtKB-KW"/>
</dbReference>
<dbReference type="InterPro" id="IPR000663">
    <property type="entry name" value="Natr_peptide"/>
</dbReference>
<dbReference type="InterPro" id="IPR030480">
    <property type="entry name" value="Natr_peptide_CS"/>
</dbReference>
<dbReference type="InterPro" id="IPR002408">
    <property type="entry name" value="Natriuretic_peptide_brain"/>
</dbReference>
<dbReference type="Pfam" id="PF00212">
    <property type="entry name" value="ANP"/>
    <property type="match status" value="1"/>
</dbReference>
<dbReference type="PRINTS" id="PR00712">
    <property type="entry name" value="BNATPEPTIDE"/>
</dbReference>
<dbReference type="PRINTS" id="PR00710">
    <property type="entry name" value="NATPEPTIDES"/>
</dbReference>
<dbReference type="SMART" id="SM00183">
    <property type="entry name" value="NAT_PEP"/>
    <property type="match status" value="1"/>
</dbReference>
<dbReference type="PROSITE" id="PS00263">
    <property type="entry name" value="NATRIURETIC_PEPTIDE"/>
    <property type="match status" value="1"/>
</dbReference>
<comment type="function">
    <text evidence="1 2">Snake venom natriuretic peptide that targets both NPR1 and NPR2 (By similarity). Exhibits hypotensive and vasodepressor activities (By similarity).</text>
</comment>
<comment type="subcellular location">
    <subcellularLocation>
        <location evidence="6">Secreted</location>
    </subcellularLocation>
</comment>
<comment type="tissue specificity">
    <text evidence="6">Expressed by the venom gland.</text>
</comment>
<comment type="similarity">
    <text evidence="5">Belongs to the natriuretic peptide family.</text>
</comment>
<proteinExistence type="evidence at transcript level"/>
<protein>
    <recommendedName>
        <fullName evidence="4">Natriuretic peptide CnNP-b</fullName>
    </recommendedName>
</protein>
<sequence>SGSKTATKGDGCFGVRIDRIGSTSGMGCGGVPKPTPGGS</sequence>
<keyword id="KW-1015">Disulfide bond</keyword>
<keyword id="KW-0382">Hypotensive agent</keyword>
<keyword id="KW-0964">Secreted</keyword>
<keyword id="KW-0800">Toxin</keyword>
<keyword id="KW-0838">Vasoactive</keyword>
<keyword id="KW-0840">Vasodilator</keyword>
<accession>Q1ZYW0</accession>
<organism>
    <name type="scientific">Cryptophis nigrescens</name>
    <name type="common">Eastern small-eyed snake</name>
    <name type="synonym">Rhinoplocephalus nigrescens</name>
    <dbReference type="NCBI Taxonomy" id="292442"/>
    <lineage>
        <taxon>Eukaryota</taxon>
        <taxon>Metazoa</taxon>
        <taxon>Chordata</taxon>
        <taxon>Craniata</taxon>
        <taxon>Vertebrata</taxon>
        <taxon>Euteleostomi</taxon>
        <taxon>Lepidosauria</taxon>
        <taxon>Squamata</taxon>
        <taxon>Bifurcata</taxon>
        <taxon>Unidentata</taxon>
        <taxon>Episquamata</taxon>
        <taxon>Toxicofera</taxon>
        <taxon>Serpentes</taxon>
        <taxon>Colubroidea</taxon>
        <taxon>Elapidae</taxon>
        <taxon>Hydrophiinae</taxon>
        <taxon>Cryptophis</taxon>
    </lineage>
</organism>
<evidence type="ECO:0000250" key="1">
    <source>
        <dbReference type="UniProtKB" id="C6EVG7"/>
    </source>
</evidence>
<evidence type="ECO:0000250" key="2">
    <source>
        <dbReference type="UniProtKB" id="Q3SAE9"/>
    </source>
</evidence>
<evidence type="ECO:0000256" key="3">
    <source>
        <dbReference type="SAM" id="MobiDB-lite"/>
    </source>
</evidence>
<evidence type="ECO:0000303" key="4">
    <source>
    </source>
</evidence>
<evidence type="ECO:0000305" key="5"/>
<evidence type="ECO:0000305" key="6">
    <source>
    </source>
</evidence>
<name>VNPB_CRYNI</name>
<reference key="1">
    <citation type="journal article" date="2006" name="Biochimie">
        <title>Cloning and characterisation of natriuretic peptides from the venom glands of Australian elapids.</title>
        <authorList>
            <person name="St Pierre L."/>
            <person name="Flight S."/>
            <person name="Masci P.P."/>
            <person name="Hanchard K.J."/>
            <person name="Lewis R.J."/>
            <person name="Alewood P.F."/>
            <person name="de Jersey J."/>
            <person name="Lavin M.F."/>
        </authorList>
    </citation>
    <scope>NUCLEOTIDE SEQUENCE [MRNA]</scope>
    <source>
        <tissue>Venom gland</tissue>
    </source>
</reference>